<organism>
    <name type="scientific">Listeria monocytogenes serovar 1/2a (strain ATCC BAA-679 / EGD-e)</name>
    <dbReference type="NCBI Taxonomy" id="169963"/>
    <lineage>
        <taxon>Bacteria</taxon>
        <taxon>Bacillati</taxon>
        <taxon>Bacillota</taxon>
        <taxon>Bacilli</taxon>
        <taxon>Bacillales</taxon>
        <taxon>Listeriaceae</taxon>
        <taxon>Listeria</taxon>
    </lineage>
</organism>
<protein>
    <recommendedName>
        <fullName evidence="1">Epoxyqueuosine reductase</fullName>
        <ecNumber evidence="1">1.17.99.6</ecNumber>
    </recommendedName>
    <alternativeName>
        <fullName evidence="1">Queuosine biosynthesis protein QueG</fullName>
    </alternativeName>
</protein>
<sequence>MVVKQKADYAALKEELIAYAYEIGIQKIGFTTADPFLFLKERLLEAEALDLFTGFEHPVIEERVYPELIFKEPQSIIAIALAYPSKLKEAPVSKKGARRGVFARASWGIDYHTVLREKLALLETFLIERLPDVRMKSMVDTGELSDVAVAERAGIGWRGKNTLLITPEYGSWVYLGEMITNIPFEPDTPASDLCGSCNQCVKACPTGSLLGEGKMNPKICLSYLTQTKDFLDEKYREVLHNRLYGCDTCQVVCPYNRGHDFHFHEEMEPDPELVRPELKPLLHISNRAFKEQFGDMAGSWRGKKPIQRNAIIILARYKDKTAVPDLIDCLQNDPRPVIRGTAGWALRKIGGRDAEEAVERALQTEQDVQVLQELTAIPN</sequence>
<name>QUEG_LISMO</name>
<dbReference type="EC" id="1.17.99.6" evidence="1"/>
<dbReference type="EMBL" id="AL591977">
    <property type="protein sequence ID" value="CAC99012.1"/>
    <property type="molecule type" value="Genomic_DNA"/>
</dbReference>
<dbReference type="PIR" id="AF1191">
    <property type="entry name" value="AF1191"/>
</dbReference>
<dbReference type="RefSeq" id="NP_464459.1">
    <property type="nucleotide sequence ID" value="NC_003210.1"/>
</dbReference>
<dbReference type="RefSeq" id="WP_010989619.1">
    <property type="nucleotide sequence ID" value="NZ_CP149495.1"/>
</dbReference>
<dbReference type="SMR" id="Q8Y8H0"/>
<dbReference type="STRING" id="169963.gene:17593590"/>
<dbReference type="PaxDb" id="169963-lmo0934"/>
<dbReference type="EnsemblBacteria" id="CAC99012">
    <property type="protein sequence ID" value="CAC99012"/>
    <property type="gene ID" value="CAC99012"/>
</dbReference>
<dbReference type="GeneID" id="986642"/>
<dbReference type="KEGG" id="lmo:lmo0934"/>
<dbReference type="PATRIC" id="fig|169963.11.peg.961"/>
<dbReference type="eggNOG" id="COG1600">
    <property type="taxonomic scope" value="Bacteria"/>
</dbReference>
<dbReference type="HOGENOM" id="CLU_030790_2_0_9"/>
<dbReference type="OrthoDB" id="9784571at2"/>
<dbReference type="PhylomeDB" id="Q8Y8H0"/>
<dbReference type="BioCyc" id="LMON169963:LMO0934-MONOMER"/>
<dbReference type="UniPathway" id="UPA00392"/>
<dbReference type="Proteomes" id="UP000000817">
    <property type="component" value="Chromosome"/>
</dbReference>
<dbReference type="GO" id="GO:0005737">
    <property type="term" value="C:cytoplasm"/>
    <property type="evidence" value="ECO:0007669"/>
    <property type="project" value="UniProtKB-SubCell"/>
</dbReference>
<dbReference type="GO" id="GO:0051539">
    <property type="term" value="F:4 iron, 4 sulfur cluster binding"/>
    <property type="evidence" value="ECO:0007669"/>
    <property type="project" value="UniProtKB-KW"/>
</dbReference>
<dbReference type="GO" id="GO:0052693">
    <property type="term" value="F:epoxyqueuosine reductase activity"/>
    <property type="evidence" value="ECO:0000318"/>
    <property type="project" value="GO_Central"/>
</dbReference>
<dbReference type="GO" id="GO:0046872">
    <property type="term" value="F:metal ion binding"/>
    <property type="evidence" value="ECO:0007669"/>
    <property type="project" value="UniProtKB-KW"/>
</dbReference>
<dbReference type="GO" id="GO:0008616">
    <property type="term" value="P:queuosine biosynthetic process"/>
    <property type="evidence" value="ECO:0000318"/>
    <property type="project" value="GO_Central"/>
</dbReference>
<dbReference type="GO" id="GO:0006400">
    <property type="term" value="P:tRNA modification"/>
    <property type="evidence" value="ECO:0007669"/>
    <property type="project" value="UniProtKB-UniRule"/>
</dbReference>
<dbReference type="FunFam" id="3.30.70.20:FF:000037">
    <property type="entry name" value="Epoxyqueuosine reductase"/>
    <property type="match status" value="1"/>
</dbReference>
<dbReference type="Gene3D" id="3.30.70.20">
    <property type="match status" value="1"/>
</dbReference>
<dbReference type="Gene3D" id="1.25.10.10">
    <property type="entry name" value="Leucine-rich Repeat Variant"/>
    <property type="match status" value="1"/>
</dbReference>
<dbReference type="HAMAP" id="MF_00916">
    <property type="entry name" value="QueG"/>
    <property type="match status" value="1"/>
</dbReference>
<dbReference type="InterPro" id="IPR017896">
    <property type="entry name" value="4Fe4S_Fe-S-bd"/>
</dbReference>
<dbReference type="InterPro" id="IPR017900">
    <property type="entry name" value="4Fe4S_Fe_S_CS"/>
</dbReference>
<dbReference type="InterPro" id="IPR011989">
    <property type="entry name" value="ARM-like"/>
</dbReference>
<dbReference type="InterPro" id="IPR016024">
    <property type="entry name" value="ARM-type_fold"/>
</dbReference>
<dbReference type="InterPro" id="IPR004155">
    <property type="entry name" value="PBS_lyase_HEAT"/>
</dbReference>
<dbReference type="InterPro" id="IPR004453">
    <property type="entry name" value="QueG"/>
</dbReference>
<dbReference type="InterPro" id="IPR013542">
    <property type="entry name" value="QueG_DUF1730"/>
</dbReference>
<dbReference type="NCBIfam" id="TIGR00276">
    <property type="entry name" value="tRNA epoxyqueuosine(34) reductase QueG"/>
    <property type="match status" value="1"/>
</dbReference>
<dbReference type="PANTHER" id="PTHR30002">
    <property type="entry name" value="EPOXYQUEUOSINE REDUCTASE"/>
    <property type="match status" value="1"/>
</dbReference>
<dbReference type="PANTHER" id="PTHR30002:SF4">
    <property type="entry name" value="EPOXYQUEUOSINE REDUCTASE"/>
    <property type="match status" value="1"/>
</dbReference>
<dbReference type="Pfam" id="PF13484">
    <property type="entry name" value="Fer4_16"/>
    <property type="match status" value="1"/>
</dbReference>
<dbReference type="Pfam" id="PF13646">
    <property type="entry name" value="HEAT_2"/>
    <property type="match status" value="1"/>
</dbReference>
<dbReference type="Pfam" id="PF08331">
    <property type="entry name" value="QueG_DUF1730"/>
    <property type="match status" value="1"/>
</dbReference>
<dbReference type="SMART" id="SM00567">
    <property type="entry name" value="EZ_HEAT"/>
    <property type="match status" value="2"/>
</dbReference>
<dbReference type="SUPFAM" id="SSF54862">
    <property type="entry name" value="4Fe-4S ferredoxins"/>
    <property type="match status" value="1"/>
</dbReference>
<dbReference type="SUPFAM" id="SSF48371">
    <property type="entry name" value="ARM repeat"/>
    <property type="match status" value="1"/>
</dbReference>
<dbReference type="PROSITE" id="PS00198">
    <property type="entry name" value="4FE4S_FER_1"/>
    <property type="match status" value="1"/>
</dbReference>
<dbReference type="PROSITE" id="PS51379">
    <property type="entry name" value="4FE4S_FER_2"/>
    <property type="match status" value="1"/>
</dbReference>
<accession>Q8Y8H0</accession>
<evidence type="ECO:0000255" key="1">
    <source>
        <dbReference type="HAMAP-Rule" id="MF_00916"/>
    </source>
</evidence>
<proteinExistence type="inferred from homology"/>
<feature type="chain" id="PRO_0000416075" description="Epoxyqueuosine reductase">
    <location>
        <begin position="1"/>
        <end position="379"/>
    </location>
</feature>
<feature type="domain" description="4Fe-4S ferredoxin-type" evidence="1">
    <location>
        <begin position="184"/>
        <end position="214"/>
    </location>
</feature>
<feature type="repeat" description="HEAT-like PBS-type">
    <location>
        <begin position="307"/>
        <end position="332"/>
    </location>
</feature>
<feature type="active site" description="Proton donor" evidence="1">
    <location>
        <position position="140"/>
    </location>
</feature>
<feature type="binding site" evidence="1">
    <location>
        <position position="194"/>
    </location>
    <ligand>
        <name>[4Fe-4S] cluster</name>
        <dbReference type="ChEBI" id="CHEBI:49883"/>
        <label>1</label>
    </ligand>
</feature>
<feature type="binding site" evidence="1">
    <location>
        <position position="197"/>
    </location>
    <ligand>
        <name>[4Fe-4S] cluster</name>
        <dbReference type="ChEBI" id="CHEBI:49883"/>
        <label>1</label>
    </ligand>
</feature>
<feature type="binding site" evidence="1">
    <location>
        <position position="200"/>
    </location>
    <ligand>
        <name>[4Fe-4S] cluster</name>
        <dbReference type="ChEBI" id="CHEBI:49883"/>
        <label>1</label>
    </ligand>
</feature>
<feature type="binding site" evidence="1">
    <location>
        <position position="204"/>
    </location>
    <ligand>
        <name>[4Fe-4S] cluster</name>
        <dbReference type="ChEBI" id="CHEBI:49883"/>
        <label>2</label>
    </ligand>
</feature>
<feature type="binding site" evidence="1">
    <location>
        <position position="220"/>
    </location>
    <ligand>
        <name>[4Fe-4S] cluster</name>
        <dbReference type="ChEBI" id="CHEBI:49883"/>
        <label>2</label>
    </ligand>
</feature>
<feature type="binding site" evidence="1">
    <location>
        <position position="246"/>
    </location>
    <ligand>
        <name>[4Fe-4S] cluster</name>
        <dbReference type="ChEBI" id="CHEBI:49883"/>
        <label>2</label>
    </ligand>
</feature>
<feature type="binding site" evidence="1">
    <location>
        <position position="249"/>
    </location>
    <ligand>
        <name>[4Fe-4S] cluster</name>
        <dbReference type="ChEBI" id="CHEBI:49883"/>
        <label>2</label>
    </ligand>
</feature>
<feature type="binding site" evidence="1">
    <location>
        <position position="253"/>
    </location>
    <ligand>
        <name>[4Fe-4S] cluster</name>
        <dbReference type="ChEBI" id="CHEBI:49883"/>
        <label>1</label>
    </ligand>
</feature>
<gene>
    <name evidence="1" type="primary">queG</name>
    <name type="ordered locus">lmo0934</name>
</gene>
<reference key="1">
    <citation type="journal article" date="2001" name="Science">
        <title>Comparative genomics of Listeria species.</title>
        <authorList>
            <person name="Glaser P."/>
            <person name="Frangeul L."/>
            <person name="Buchrieser C."/>
            <person name="Rusniok C."/>
            <person name="Amend A."/>
            <person name="Baquero F."/>
            <person name="Berche P."/>
            <person name="Bloecker H."/>
            <person name="Brandt P."/>
            <person name="Chakraborty T."/>
            <person name="Charbit A."/>
            <person name="Chetouani F."/>
            <person name="Couve E."/>
            <person name="de Daruvar A."/>
            <person name="Dehoux P."/>
            <person name="Domann E."/>
            <person name="Dominguez-Bernal G."/>
            <person name="Duchaud E."/>
            <person name="Durant L."/>
            <person name="Dussurget O."/>
            <person name="Entian K.-D."/>
            <person name="Fsihi H."/>
            <person name="Garcia-del Portillo F."/>
            <person name="Garrido P."/>
            <person name="Gautier L."/>
            <person name="Goebel W."/>
            <person name="Gomez-Lopez N."/>
            <person name="Hain T."/>
            <person name="Hauf J."/>
            <person name="Jackson D."/>
            <person name="Jones L.-M."/>
            <person name="Kaerst U."/>
            <person name="Kreft J."/>
            <person name="Kuhn M."/>
            <person name="Kunst F."/>
            <person name="Kurapkat G."/>
            <person name="Madueno E."/>
            <person name="Maitournam A."/>
            <person name="Mata Vicente J."/>
            <person name="Ng E."/>
            <person name="Nedjari H."/>
            <person name="Nordsiek G."/>
            <person name="Novella S."/>
            <person name="de Pablos B."/>
            <person name="Perez-Diaz J.-C."/>
            <person name="Purcell R."/>
            <person name="Remmel B."/>
            <person name="Rose M."/>
            <person name="Schlueter T."/>
            <person name="Simoes N."/>
            <person name="Tierrez A."/>
            <person name="Vazquez-Boland J.-A."/>
            <person name="Voss H."/>
            <person name="Wehland J."/>
            <person name="Cossart P."/>
        </authorList>
    </citation>
    <scope>NUCLEOTIDE SEQUENCE [LARGE SCALE GENOMIC DNA]</scope>
    <source>
        <strain>ATCC BAA-679 / EGD-e</strain>
    </source>
</reference>
<comment type="function">
    <text evidence="1">Catalyzes the conversion of epoxyqueuosine (oQ) to queuosine (Q), which is a hypermodified base found in the wobble positions of tRNA(Asp), tRNA(Asn), tRNA(His) and tRNA(Tyr).</text>
</comment>
<comment type="catalytic activity">
    <reaction evidence="1">
        <text>epoxyqueuosine(34) in tRNA + AH2 = queuosine(34) in tRNA + A + H2O</text>
        <dbReference type="Rhea" id="RHEA:32159"/>
        <dbReference type="Rhea" id="RHEA-COMP:18571"/>
        <dbReference type="Rhea" id="RHEA-COMP:18582"/>
        <dbReference type="ChEBI" id="CHEBI:13193"/>
        <dbReference type="ChEBI" id="CHEBI:15377"/>
        <dbReference type="ChEBI" id="CHEBI:17499"/>
        <dbReference type="ChEBI" id="CHEBI:194431"/>
        <dbReference type="ChEBI" id="CHEBI:194443"/>
        <dbReference type="EC" id="1.17.99.6"/>
    </reaction>
</comment>
<comment type="cofactor">
    <cofactor evidence="1">
        <name>cob(II)alamin</name>
        <dbReference type="ChEBI" id="CHEBI:16304"/>
    </cofactor>
</comment>
<comment type="cofactor">
    <cofactor evidence="1">
        <name>[4Fe-4S] cluster</name>
        <dbReference type="ChEBI" id="CHEBI:49883"/>
    </cofactor>
    <text evidence="1">Binds 2 [4Fe-4S] clusters per monomer.</text>
</comment>
<comment type="pathway">
    <text evidence="1">tRNA modification; tRNA-queuosine biosynthesis.</text>
</comment>
<comment type="subunit">
    <text evidence="1">Monomer.</text>
</comment>
<comment type="subcellular location">
    <subcellularLocation>
        <location evidence="1">Cytoplasm</location>
    </subcellularLocation>
</comment>
<comment type="similarity">
    <text evidence="1">Belongs to the QueG family.</text>
</comment>
<keyword id="KW-0004">4Fe-4S</keyword>
<keyword id="KW-0963">Cytoplasm</keyword>
<keyword id="KW-0408">Iron</keyword>
<keyword id="KW-0411">Iron-sulfur</keyword>
<keyword id="KW-0479">Metal-binding</keyword>
<keyword id="KW-0560">Oxidoreductase</keyword>
<keyword id="KW-0671">Queuosine biosynthesis</keyword>
<keyword id="KW-1185">Reference proteome</keyword>
<keyword id="KW-0819">tRNA processing</keyword>